<keyword id="KW-0997">Cell inner membrane</keyword>
<keyword id="KW-1003">Cell membrane</keyword>
<keyword id="KW-0133">Cell shape</keyword>
<keyword id="KW-0961">Cell wall biogenesis/degradation</keyword>
<keyword id="KW-0328">Glycosyltransferase</keyword>
<keyword id="KW-0472">Membrane</keyword>
<keyword id="KW-0573">Peptidoglycan synthesis</keyword>
<keyword id="KW-0808">Transferase</keyword>
<keyword id="KW-0812">Transmembrane</keyword>
<keyword id="KW-1133">Transmembrane helix</keyword>
<proteinExistence type="inferred from homology"/>
<dbReference type="EC" id="2.4.99.28" evidence="1"/>
<dbReference type="EMBL" id="CP000308">
    <property type="protein sequence ID" value="ABG15712.1"/>
    <property type="molecule type" value="Genomic_DNA"/>
</dbReference>
<dbReference type="RefSeq" id="WP_002210144.1">
    <property type="nucleotide sequence ID" value="NZ_CP009906.1"/>
</dbReference>
<dbReference type="SMR" id="Q1C1G0"/>
<dbReference type="CAZy" id="GT51">
    <property type="family name" value="Glycosyltransferase Family 51"/>
</dbReference>
<dbReference type="GeneID" id="57975163"/>
<dbReference type="KEGG" id="ypa:YPA_3750"/>
<dbReference type="UniPathway" id="UPA00219"/>
<dbReference type="Proteomes" id="UP000001971">
    <property type="component" value="Chromosome"/>
</dbReference>
<dbReference type="GO" id="GO:0009274">
    <property type="term" value="C:peptidoglycan-based cell wall"/>
    <property type="evidence" value="ECO:0007669"/>
    <property type="project" value="InterPro"/>
</dbReference>
<dbReference type="GO" id="GO:0005886">
    <property type="term" value="C:plasma membrane"/>
    <property type="evidence" value="ECO:0007669"/>
    <property type="project" value="UniProtKB-SubCell"/>
</dbReference>
<dbReference type="GO" id="GO:0016763">
    <property type="term" value="F:pentosyltransferase activity"/>
    <property type="evidence" value="ECO:0007669"/>
    <property type="project" value="InterPro"/>
</dbReference>
<dbReference type="GO" id="GO:0008955">
    <property type="term" value="F:peptidoglycan glycosyltransferase activity"/>
    <property type="evidence" value="ECO:0007669"/>
    <property type="project" value="UniProtKB-UniRule"/>
</dbReference>
<dbReference type="GO" id="GO:0071555">
    <property type="term" value="P:cell wall organization"/>
    <property type="evidence" value="ECO:0007669"/>
    <property type="project" value="UniProtKB-KW"/>
</dbReference>
<dbReference type="GO" id="GO:0009252">
    <property type="term" value="P:peptidoglycan biosynthetic process"/>
    <property type="evidence" value="ECO:0007669"/>
    <property type="project" value="UniProtKB-UniRule"/>
</dbReference>
<dbReference type="GO" id="GO:0008360">
    <property type="term" value="P:regulation of cell shape"/>
    <property type="evidence" value="ECO:0007669"/>
    <property type="project" value="UniProtKB-KW"/>
</dbReference>
<dbReference type="Gene3D" id="1.10.3810.10">
    <property type="entry name" value="Biosynthetic peptidoglycan transglycosylase-like"/>
    <property type="match status" value="1"/>
</dbReference>
<dbReference type="HAMAP" id="MF_00766">
    <property type="entry name" value="PGT_MtgA"/>
    <property type="match status" value="1"/>
</dbReference>
<dbReference type="InterPro" id="IPR001264">
    <property type="entry name" value="Glyco_trans_51"/>
</dbReference>
<dbReference type="InterPro" id="IPR023346">
    <property type="entry name" value="Lysozyme-like_dom_sf"/>
</dbReference>
<dbReference type="InterPro" id="IPR036950">
    <property type="entry name" value="PBP_transglycosylase"/>
</dbReference>
<dbReference type="InterPro" id="IPR011812">
    <property type="entry name" value="Pep_trsgly"/>
</dbReference>
<dbReference type="NCBIfam" id="TIGR02070">
    <property type="entry name" value="mono_pep_trsgly"/>
    <property type="match status" value="1"/>
</dbReference>
<dbReference type="PANTHER" id="PTHR30400:SF0">
    <property type="entry name" value="BIOSYNTHETIC PEPTIDOGLYCAN TRANSGLYCOSYLASE"/>
    <property type="match status" value="1"/>
</dbReference>
<dbReference type="PANTHER" id="PTHR30400">
    <property type="entry name" value="MONOFUNCTIONAL BIOSYNTHETIC PEPTIDOGLYCAN TRANSGLYCOSYLASE"/>
    <property type="match status" value="1"/>
</dbReference>
<dbReference type="Pfam" id="PF00912">
    <property type="entry name" value="Transgly"/>
    <property type="match status" value="1"/>
</dbReference>
<dbReference type="SUPFAM" id="SSF53955">
    <property type="entry name" value="Lysozyme-like"/>
    <property type="match status" value="1"/>
</dbReference>
<comment type="function">
    <text evidence="1">Peptidoglycan polymerase that catalyzes glycan chain elongation from lipid-linked precursors.</text>
</comment>
<comment type="catalytic activity">
    <reaction evidence="1">
        <text>[GlcNAc-(1-&gt;4)-Mur2Ac(oyl-L-Ala-gamma-D-Glu-L-Lys-D-Ala-D-Ala)](n)-di-trans,octa-cis-undecaprenyl diphosphate + beta-D-GlcNAc-(1-&gt;4)-Mur2Ac(oyl-L-Ala-gamma-D-Glu-L-Lys-D-Ala-D-Ala)-di-trans,octa-cis-undecaprenyl diphosphate = [GlcNAc-(1-&gt;4)-Mur2Ac(oyl-L-Ala-gamma-D-Glu-L-Lys-D-Ala-D-Ala)](n+1)-di-trans,octa-cis-undecaprenyl diphosphate + di-trans,octa-cis-undecaprenyl diphosphate + H(+)</text>
        <dbReference type="Rhea" id="RHEA:23708"/>
        <dbReference type="Rhea" id="RHEA-COMP:9602"/>
        <dbReference type="Rhea" id="RHEA-COMP:9603"/>
        <dbReference type="ChEBI" id="CHEBI:15378"/>
        <dbReference type="ChEBI" id="CHEBI:58405"/>
        <dbReference type="ChEBI" id="CHEBI:60033"/>
        <dbReference type="ChEBI" id="CHEBI:78435"/>
        <dbReference type="EC" id="2.4.99.28"/>
    </reaction>
</comment>
<comment type="pathway">
    <text evidence="1">Cell wall biogenesis; peptidoglycan biosynthesis.</text>
</comment>
<comment type="subcellular location">
    <subcellularLocation>
        <location evidence="1">Cell inner membrane</location>
        <topology evidence="1">Single-pass membrane protein</topology>
    </subcellularLocation>
</comment>
<comment type="similarity">
    <text evidence="1">Belongs to the glycosyltransferase 51 family.</text>
</comment>
<protein>
    <recommendedName>
        <fullName evidence="1">Biosynthetic peptidoglycan transglycosylase</fullName>
        <ecNumber evidence="1">2.4.99.28</ecNumber>
    </recommendedName>
    <alternativeName>
        <fullName evidence="1">Glycan polymerase</fullName>
    </alternativeName>
    <alternativeName>
        <fullName evidence="1">Peptidoglycan glycosyltransferase MtgA</fullName>
        <shortName evidence="1">PGT</shortName>
    </alternativeName>
</protein>
<gene>
    <name evidence="1" type="primary">mtgA</name>
    <name type="ordered locus">YPA_3750</name>
</gene>
<feature type="chain" id="PRO_0000257700" description="Biosynthetic peptidoglycan transglycosylase">
    <location>
        <begin position="1"/>
        <end position="241"/>
    </location>
</feature>
<feature type="transmembrane region" description="Helical" evidence="1">
    <location>
        <begin position="18"/>
        <end position="38"/>
    </location>
</feature>
<evidence type="ECO:0000255" key="1">
    <source>
        <dbReference type="HAMAP-Rule" id="MF_00766"/>
    </source>
</evidence>
<sequence length="241" mass="27096">MISVRRGFSQLWYWGKRGVIGIIALWMAGILIFAFLPVPFSMVMIERQLGAWLTGDFAYVAHSDWVPMDEISPYMALAVMAAEDQKFPDHWGFDVGAIESALSHNQRNQKRIRGASTLSQQTAKNVFLWDGRSWVRKGLEVGLTAGIELIWTKRRILTVYLNIAEFGNGIFGVEAAARHFFNKPASKLSASEAALLAAVLPNPLRFKVNAPSGYVISRQQWILRQMHQLGGKTFLQENTLD</sequence>
<reference key="1">
    <citation type="journal article" date="2006" name="J. Bacteriol.">
        <title>Complete genome sequence of Yersinia pestis strains Antiqua and Nepal516: evidence of gene reduction in an emerging pathogen.</title>
        <authorList>
            <person name="Chain P.S.G."/>
            <person name="Hu P."/>
            <person name="Malfatti S.A."/>
            <person name="Radnedge L."/>
            <person name="Larimer F."/>
            <person name="Vergez L.M."/>
            <person name="Worsham P."/>
            <person name="Chu M.C."/>
            <person name="Andersen G.L."/>
        </authorList>
    </citation>
    <scope>NUCLEOTIDE SEQUENCE [LARGE SCALE GENOMIC DNA]</scope>
    <source>
        <strain>Antiqua</strain>
    </source>
</reference>
<name>MTGA_YERPA</name>
<accession>Q1C1G0</accession>
<organism>
    <name type="scientific">Yersinia pestis bv. Antiqua (strain Antiqua)</name>
    <dbReference type="NCBI Taxonomy" id="360102"/>
    <lineage>
        <taxon>Bacteria</taxon>
        <taxon>Pseudomonadati</taxon>
        <taxon>Pseudomonadota</taxon>
        <taxon>Gammaproteobacteria</taxon>
        <taxon>Enterobacterales</taxon>
        <taxon>Yersiniaceae</taxon>
        <taxon>Yersinia</taxon>
    </lineage>
</organism>